<sequence>MKFTVYVKPNSKKVFFRKEEDGVLTIAVREPALEGKANEAVIESISKEMKVPKSKIRILSGQKNKKKIIEIDL</sequence>
<evidence type="ECO:0000255" key="1">
    <source>
        <dbReference type="HAMAP-Rule" id="MF_00634"/>
    </source>
</evidence>
<gene>
    <name type="ordered locus">LIC_12068</name>
</gene>
<feature type="chain" id="PRO_0000139446" description="UPF0235 protein LIC_12068">
    <location>
        <begin position="1"/>
        <end position="73"/>
    </location>
</feature>
<proteinExistence type="inferred from homology"/>
<protein>
    <recommendedName>
        <fullName evidence="1">UPF0235 protein LIC_12068</fullName>
    </recommendedName>
</protein>
<accession>Q72QP5</accession>
<name>Y2068_LEPIC</name>
<reference key="1">
    <citation type="journal article" date="2004" name="J. Bacteriol.">
        <title>Comparative genomics of two Leptospira interrogans serovars reveals novel insights into physiology and pathogenesis.</title>
        <authorList>
            <person name="Nascimento A.L.T.O."/>
            <person name="Ko A.I."/>
            <person name="Martins E.A.L."/>
            <person name="Monteiro-Vitorello C.B."/>
            <person name="Ho P.L."/>
            <person name="Haake D.A."/>
            <person name="Verjovski-Almeida S."/>
            <person name="Hartskeerl R.A."/>
            <person name="Marques M.V."/>
            <person name="Oliveira M.C."/>
            <person name="Menck C.F.M."/>
            <person name="Leite L.C.C."/>
            <person name="Carrer H."/>
            <person name="Coutinho L.L."/>
            <person name="Degrave W.M."/>
            <person name="Dellagostin O.A."/>
            <person name="El-Dorry H."/>
            <person name="Ferro E.S."/>
            <person name="Ferro M.I.T."/>
            <person name="Furlan L.R."/>
            <person name="Gamberini M."/>
            <person name="Giglioti E.A."/>
            <person name="Goes-Neto A."/>
            <person name="Goldman G.H."/>
            <person name="Goldman M.H.S."/>
            <person name="Harakava R."/>
            <person name="Jeronimo S.M.B."/>
            <person name="Junqueira-de-Azevedo I.L.M."/>
            <person name="Kimura E.T."/>
            <person name="Kuramae E.E."/>
            <person name="Lemos E.G.M."/>
            <person name="Lemos M.V.F."/>
            <person name="Marino C.L."/>
            <person name="Nunes L.R."/>
            <person name="de Oliveira R.C."/>
            <person name="Pereira G.G."/>
            <person name="Reis M.S."/>
            <person name="Schriefer A."/>
            <person name="Siqueira W.J."/>
            <person name="Sommer P."/>
            <person name="Tsai S.M."/>
            <person name="Simpson A.J.G."/>
            <person name="Ferro J.A."/>
            <person name="Camargo L.E.A."/>
            <person name="Kitajima J.P."/>
            <person name="Setubal J.C."/>
            <person name="Van Sluys M.A."/>
        </authorList>
    </citation>
    <scope>NUCLEOTIDE SEQUENCE [LARGE SCALE GENOMIC DNA]</scope>
    <source>
        <strain>Fiocruz L1-130</strain>
    </source>
</reference>
<dbReference type="EMBL" id="AE016823">
    <property type="protein sequence ID" value="AAS70639.1"/>
    <property type="molecule type" value="Genomic_DNA"/>
</dbReference>
<dbReference type="RefSeq" id="WP_000673486.1">
    <property type="nucleotide sequence ID" value="NC_005823.1"/>
</dbReference>
<dbReference type="SMR" id="Q72QP5"/>
<dbReference type="KEGG" id="lic:LIC_12068"/>
<dbReference type="HOGENOM" id="CLU_130694_5_3_12"/>
<dbReference type="Proteomes" id="UP000007037">
    <property type="component" value="Chromosome I"/>
</dbReference>
<dbReference type="Gene3D" id="3.30.1200.10">
    <property type="entry name" value="YggU-like"/>
    <property type="match status" value="1"/>
</dbReference>
<dbReference type="HAMAP" id="MF_00634">
    <property type="entry name" value="UPF0235"/>
    <property type="match status" value="1"/>
</dbReference>
<dbReference type="InterPro" id="IPR003746">
    <property type="entry name" value="DUF167"/>
</dbReference>
<dbReference type="InterPro" id="IPR036591">
    <property type="entry name" value="YggU-like_sf"/>
</dbReference>
<dbReference type="NCBIfam" id="TIGR00251">
    <property type="entry name" value="DUF167 family protein"/>
    <property type="match status" value="1"/>
</dbReference>
<dbReference type="Pfam" id="PF02594">
    <property type="entry name" value="DUF167"/>
    <property type="match status" value="1"/>
</dbReference>
<dbReference type="SMART" id="SM01152">
    <property type="entry name" value="DUF167"/>
    <property type="match status" value="1"/>
</dbReference>
<dbReference type="SUPFAM" id="SSF69786">
    <property type="entry name" value="YggU-like"/>
    <property type="match status" value="1"/>
</dbReference>
<organism>
    <name type="scientific">Leptospira interrogans serogroup Icterohaemorrhagiae serovar copenhageni (strain Fiocruz L1-130)</name>
    <dbReference type="NCBI Taxonomy" id="267671"/>
    <lineage>
        <taxon>Bacteria</taxon>
        <taxon>Pseudomonadati</taxon>
        <taxon>Spirochaetota</taxon>
        <taxon>Spirochaetia</taxon>
        <taxon>Leptospirales</taxon>
        <taxon>Leptospiraceae</taxon>
        <taxon>Leptospira</taxon>
    </lineage>
</organism>
<comment type="similarity">
    <text evidence="1">Belongs to the UPF0235 family.</text>
</comment>